<protein>
    <recommendedName>
        <fullName evidence="1">ATP-dependent DNA helicase mph1</fullName>
        <ecNumber evidence="1 2">3.6.4.12</ecNumber>
    </recommendedName>
    <alternativeName>
        <fullName evidence="2">FANCM-like protein 1</fullName>
    </alternativeName>
</protein>
<dbReference type="EC" id="3.6.4.12" evidence="1 2"/>
<dbReference type="EMBL" id="AM269966">
    <property type="protein sequence ID" value="CAK43695.1"/>
    <property type="status" value="ALT_INIT"/>
    <property type="molecule type" value="Genomic_DNA"/>
</dbReference>
<dbReference type="RefSeq" id="XP_001388951.2">
    <property type="nucleotide sequence ID" value="XM_001388914.2"/>
</dbReference>
<dbReference type="SMR" id="A2Q8R2"/>
<dbReference type="EnsemblFungi" id="CAK43695">
    <property type="protein sequence ID" value="CAK43695"/>
    <property type="gene ID" value="An01g05260"/>
</dbReference>
<dbReference type="GeneID" id="4978206"/>
<dbReference type="KEGG" id="ang:An01g05260"/>
<dbReference type="VEuPathDB" id="FungiDB:An01g05260"/>
<dbReference type="Proteomes" id="UP000006706">
    <property type="component" value="Chromosome 2R"/>
</dbReference>
<dbReference type="GO" id="GO:0005634">
    <property type="term" value="C:nucleus"/>
    <property type="evidence" value="ECO:0007669"/>
    <property type="project" value="UniProtKB-SubCell"/>
</dbReference>
<dbReference type="GO" id="GO:0043138">
    <property type="term" value="F:3'-5' DNA helicase activity"/>
    <property type="evidence" value="ECO:0007669"/>
    <property type="project" value="EnsemblFungi"/>
</dbReference>
<dbReference type="GO" id="GO:0005524">
    <property type="term" value="F:ATP binding"/>
    <property type="evidence" value="ECO:0007669"/>
    <property type="project" value="UniProtKB-KW"/>
</dbReference>
<dbReference type="GO" id="GO:0016887">
    <property type="term" value="F:ATP hydrolysis activity"/>
    <property type="evidence" value="ECO:0007669"/>
    <property type="project" value="RHEA"/>
</dbReference>
<dbReference type="GO" id="GO:0033677">
    <property type="term" value="F:DNA/RNA helicase activity"/>
    <property type="evidence" value="ECO:0007669"/>
    <property type="project" value="EnsemblFungi"/>
</dbReference>
<dbReference type="GO" id="GO:0070336">
    <property type="term" value="F:flap-structured DNA binding"/>
    <property type="evidence" value="ECO:0007669"/>
    <property type="project" value="EnsemblFungi"/>
</dbReference>
<dbReference type="GO" id="GO:0000400">
    <property type="term" value="F:four-way junction DNA binding"/>
    <property type="evidence" value="ECO:0007669"/>
    <property type="project" value="TreeGrafter"/>
</dbReference>
<dbReference type="GO" id="GO:0009378">
    <property type="term" value="F:four-way junction helicase activity"/>
    <property type="evidence" value="ECO:0007669"/>
    <property type="project" value="TreeGrafter"/>
</dbReference>
<dbReference type="GO" id="GO:0033567">
    <property type="term" value="P:DNA replication, Okazaki fragment processing"/>
    <property type="evidence" value="ECO:0007669"/>
    <property type="project" value="EnsemblFungi"/>
</dbReference>
<dbReference type="GO" id="GO:0007535">
    <property type="term" value="P:donor selection"/>
    <property type="evidence" value="ECO:0007669"/>
    <property type="project" value="EnsemblFungi"/>
</dbReference>
<dbReference type="GO" id="GO:0045003">
    <property type="term" value="P:double-strand break repair via synthesis-dependent strand annealing"/>
    <property type="evidence" value="ECO:0007669"/>
    <property type="project" value="TreeGrafter"/>
</dbReference>
<dbReference type="GO" id="GO:0036297">
    <property type="term" value="P:interstrand cross-link repair"/>
    <property type="evidence" value="ECO:0007669"/>
    <property type="project" value="EnsemblFungi"/>
</dbReference>
<dbReference type="GO" id="GO:0060543">
    <property type="term" value="P:negative regulation of strand invasion"/>
    <property type="evidence" value="ECO:0007669"/>
    <property type="project" value="EnsemblFungi"/>
</dbReference>
<dbReference type="CDD" id="cd18033">
    <property type="entry name" value="DEXDc_FANCM"/>
    <property type="match status" value="1"/>
</dbReference>
<dbReference type="CDD" id="cd12091">
    <property type="entry name" value="FANCM_ID"/>
    <property type="match status" value="1"/>
</dbReference>
<dbReference type="CDD" id="cd18801">
    <property type="entry name" value="SF2_C_FANCM_Hef"/>
    <property type="match status" value="1"/>
</dbReference>
<dbReference type="FunFam" id="3.40.50.300:FF:000861">
    <property type="entry name" value="Fanconi anemia, complementation group M"/>
    <property type="match status" value="1"/>
</dbReference>
<dbReference type="Gene3D" id="6.10.140.100">
    <property type="match status" value="1"/>
</dbReference>
<dbReference type="Gene3D" id="1.20.1320.20">
    <property type="entry name" value="hef helicase domain"/>
    <property type="match status" value="1"/>
</dbReference>
<dbReference type="Gene3D" id="3.40.50.300">
    <property type="entry name" value="P-loop containing nucleotide triphosphate hydrolases"/>
    <property type="match status" value="2"/>
</dbReference>
<dbReference type="InterPro" id="IPR039686">
    <property type="entry name" value="FANCM/Mph1-like_ID"/>
</dbReference>
<dbReference type="InterPro" id="IPR044749">
    <property type="entry name" value="FANCM_DEXDc"/>
</dbReference>
<dbReference type="InterPro" id="IPR006935">
    <property type="entry name" value="Helicase/UvrB_N"/>
</dbReference>
<dbReference type="InterPro" id="IPR014001">
    <property type="entry name" value="Helicase_ATP-bd"/>
</dbReference>
<dbReference type="InterPro" id="IPR001650">
    <property type="entry name" value="Helicase_C-like"/>
</dbReference>
<dbReference type="InterPro" id="IPR027417">
    <property type="entry name" value="P-loop_NTPase"/>
</dbReference>
<dbReference type="InterPro" id="IPR003903">
    <property type="entry name" value="UIM_dom"/>
</dbReference>
<dbReference type="PANTHER" id="PTHR14025">
    <property type="entry name" value="FANCONI ANEMIA GROUP M FANCM FAMILY MEMBER"/>
    <property type="match status" value="1"/>
</dbReference>
<dbReference type="PANTHER" id="PTHR14025:SF20">
    <property type="entry name" value="FANCONI ANEMIA GROUP M PROTEIN"/>
    <property type="match status" value="1"/>
</dbReference>
<dbReference type="Pfam" id="PF00271">
    <property type="entry name" value="Helicase_C"/>
    <property type="match status" value="1"/>
</dbReference>
<dbReference type="Pfam" id="PF04851">
    <property type="entry name" value="ResIII"/>
    <property type="match status" value="1"/>
</dbReference>
<dbReference type="SMART" id="SM00487">
    <property type="entry name" value="DEXDc"/>
    <property type="match status" value="1"/>
</dbReference>
<dbReference type="SMART" id="SM00490">
    <property type="entry name" value="HELICc"/>
    <property type="match status" value="1"/>
</dbReference>
<dbReference type="SUPFAM" id="SSF52540">
    <property type="entry name" value="P-loop containing nucleoside triphosphate hydrolases"/>
    <property type="match status" value="1"/>
</dbReference>
<dbReference type="PROSITE" id="PS51192">
    <property type="entry name" value="HELICASE_ATP_BIND_1"/>
    <property type="match status" value="1"/>
</dbReference>
<dbReference type="PROSITE" id="PS51194">
    <property type="entry name" value="HELICASE_CTER"/>
    <property type="match status" value="1"/>
</dbReference>
<name>MPH1_ASPNC</name>
<organism>
    <name type="scientific">Aspergillus niger (strain ATCC MYA-4892 / CBS 513.88 / FGSC A1513)</name>
    <dbReference type="NCBI Taxonomy" id="425011"/>
    <lineage>
        <taxon>Eukaryota</taxon>
        <taxon>Fungi</taxon>
        <taxon>Dikarya</taxon>
        <taxon>Ascomycota</taxon>
        <taxon>Pezizomycotina</taxon>
        <taxon>Eurotiomycetes</taxon>
        <taxon>Eurotiomycetidae</taxon>
        <taxon>Eurotiales</taxon>
        <taxon>Aspergillaceae</taxon>
        <taxon>Aspergillus</taxon>
        <taxon>Aspergillus subgen. Circumdati</taxon>
    </lineage>
</organism>
<gene>
    <name evidence="1" type="primary">mph1</name>
    <name type="ORF">An01g05260</name>
</gene>
<evidence type="ECO:0000250" key="1">
    <source>
        <dbReference type="UniProtKB" id="P40562"/>
    </source>
</evidence>
<evidence type="ECO:0000250" key="2">
    <source>
        <dbReference type="UniProtKB" id="Q9UT23"/>
    </source>
</evidence>
<evidence type="ECO:0000255" key="3">
    <source>
        <dbReference type="PROSITE-ProRule" id="PRU00541"/>
    </source>
</evidence>
<evidence type="ECO:0000255" key="4">
    <source>
        <dbReference type="PROSITE-ProRule" id="PRU00542"/>
    </source>
</evidence>
<evidence type="ECO:0000256" key="5">
    <source>
        <dbReference type="SAM" id="MobiDB-lite"/>
    </source>
</evidence>
<evidence type="ECO:0000305" key="6"/>
<sequence length="1124" mass="125664">MFTLDGDSSDYFDDDLGDLGVDRPSDATDPDTPPPAKRRRLRAGKDASNADLQSHQKPRAERGDGARTALSSDSFIDYDDDEVPSPERESPYFQDDSEREARSKYKVFAPKNANIQENIFVTQLTQPPSPPEMLRGPRWKKPDPGLPTRTVATPLPETTQSRESAAGDRDDEYDDDEEMKAAIEASLQSFEEETSRPAPSVPLQKPPSSTPIIGQQSTTIEASNDLLDDIPDDAFDSDLSMSPPPAPQPRPAARSFTQSTNRPLGVRQTTLFGMVARNPENQPPRGEQVYSPPEKSEPPTQHKLNQEALGTWVYPTNLGKTRDYQFNIAQKGLFHNLLVALPTGLGKTFIAATIMLNWFRWTKDAQIVFVAPTKPLVAQQISACFEVAGIPRSQTTMLTGEAAPGIRAEEWKAKRVFFMTPQTLINDLKTGIADPKRIVLVVVDEAHRATGGYAYVEVVKFLRRYNQSFRVLALTATPGSTVESVQAVIDGLDISRVEIRTEQSLDIREYVHSKDTDVQTFQNSEEMVLCMDLMSKALQPLLDQLRSTNAYWGRDPMGLTAYGLTKARQQWMLSDSGRNAHFGVKAKMNAIFTVLASLAHGIDLLKYHGITPFYRHLLHFQSNTEGQKGGKYQRQVVQDESYKKLMNHLQPWTKNPEFIGHPKLEYLKQVVLNHFMDAGEGSGADENKDQPATRVMIFVHFRDSAEEVTRVLKRYEPMIRPHVFVGQSSAKGSEGMGQKTQLDIVQKFKKGTYNTIVATSIGEEGLDIGEVDLIVCYDSSASPIRMLQRMGRTGRKRSGKITLLLMQGKEEESYIKAKDNYEKMQQMIASGTRFTFHDDMSPRILPPGVRPVADKRAIDIPEENTVRDLPEPKRRGRAPKRPPKKFHMPDNVETGFTTASHLAGTSKRRVPNKSKARTPTPEPVELPALEDVLLTPAQQKELELHYSNAGPSEELLVSYPRSDAFPRLQLAPRPTKAVRHGSLTRRMIETLQKMDQITPDCGDRYKGILAREKASMPKASIVAPKPNGRGEAQSRTKARHTSKVVSSKSRNQEEQDVTEVQRTPPGKHSVSATNAEVEPFYCSQRTQDGDTDDDFDLPDVSTLLNRSVERPSTRGRFVLDDSDD</sequence>
<accession>A2Q8R2</accession>
<reference key="1">
    <citation type="journal article" date="2007" name="Nat. Biotechnol.">
        <title>Genome sequencing and analysis of the versatile cell factory Aspergillus niger CBS 513.88.</title>
        <authorList>
            <person name="Pel H.J."/>
            <person name="de Winde J.H."/>
            <person name="Archer D.B."/>
            <person name="Dyer P.S."/>
            <person name="Hofmann G."/>
            <person name="Schaap P.J."/>
            <person name="Turner G."/>
            <person name="de Vries R.P."/>
            <person name="Albang R."/>
            <person name="Albermann K."/>
            <person name="Andersen M.R."/>
            <person name="Bendtsen J.D."/>
            <person name="Benen J.A.E."/>
            <person name="van den Berg M."/>
            <person name="Breestraat S."/>
            <person name="Caddick M.X."/>
            <person name="Contreras R."/>
            <person name="Cornell M."/>
            <person name="Coutinho P.M."/>
            <person name="Danchin E.G.J."/>
            <person name="Debets A.J.M."/>
            <person name="Dekker P."/>
            <person name="van Dijck P.W.M."/>
            <person name="van Dijk A."/>
            <person name="Dijkhuizen L."/>
            <person name="Driessen A.J.M."/>
            <person name="d'Enfert C."/>
            <person name="Geysens S."/>
            <person name="Goosen C."/>
            <person name="Groot G.S.P."/>
            <person name="de Groot P.W.J."/>
            <person name="Guillemette T."/>
            <person name="Henrissat B."/>
            <person name="Herweijer M."/>
            <person name="van den Hombergh J.P.T.W."/>
            <person name="van den Hondel C.A.M.J.J."/>
            <person name="van der Heijden R.T.J.M."/>
            <person name="van der Kaaij R.M."/>
            <person name="Klis F.M."/>
            <person name="Kools H.J."/>
            <person name="Kubicek C.P."/>
            <person name="van Kuyk P.A."/>
            <person name="Lauber J."/>
            <person name="Lu X."/>
            <person name="van der Maarel M.J.E.C."/>
            <person name="Meulenberg R."/>
            <person name="Menke H."/>
            <person name="Mortimer M.A."/>
            <person name="Nielsen J."/>
            <person name="Oliver S.G."/>
            <person name="Olsthoorn M."/>
            <person name="Pal K."/>
            <person name="van Peij N.N.M.E."/>
            <person name="Ram A.F.J."/>
            <person name="Rinas U."/>
            <person name="Roubos J.A."/>
            <person name="Sagt C.M.J."/>
            <person name="Schmoll M."/>
            <person name="Sun J."/>
            <person name="Ussery D."/>
            <person name="Varga J."/>
            <person name="Vervecken W."/>
            <person name="van de Vondervoort P.J.J."/>
            <person name="Wedler H."/>
            <person name="Woesten H.A.B."/>
            <person name="Zeng A.-P."/>
            <person name="van Ooyen A.J.J."/>
            <person name="Visser J."/>
            <person name="Stam H."/>
        </authorList>
    </citation>
    <scope>NUCLEOTIDE SEQUENCE [LARGE SCALE GENOMIC DNA]</scope>
    <source>
        <strain>ATCC MYA-4892 / CBS 513.88 / FGSC A1513</strain>
    </source>
</reference>
<proteinExistence type="inferred from homology"/>
<keyword id="KW-0067">ATP-binding</keyword>
<keyword id="KW-0227">DNA damage</keyword>
<keyword id="KW-0234">DNA repair</keyword>
<keyword id="KW-0238">DNA-binding</keyword>
<keyword id="KW-0347">Helicase</keyword>
<keyword id="KW-0378">Hydrolase</keyword>
<keyword id="KW-0547">Nucleotide-binding</keyword>
<keyword id="KW-0539">Nucleus</keyword>
<keyword id="KW-1185">Reference proteome</keyword>
<comment type="function">
    <text evidence="2">ATP-dependent DNA helicase involved in DNA damage repair by homologous recombination and in genome maintenance. Capable of unwinding D-loops. Plays a role in limiting crossover recombinants during mitotic DNA double-strand break (DSB) repair. Component of a FANCM-MHF complex which promotes gene conversion at blocked replication forks, probably by reversal of the stalled fork.</text>
</comment>
<comment type="catalytic activity">
    <reaction evidence="2">
        <text>ATP + H2O = ADP + phosphate + H(+)</text>
        <dbReference type="Rhea" id="RHEA:13065"/>
        <dbReference type="ChEBI" id="CHEBI:15377"/>
        <dbReference type="ChEBI" id="CHEBI:15378"/>
        <dbReference type="ChEBI" id="CHEBI:30616"/>
        <dbReference type="ChEBI" id="CHEBI:43474"/>
        <dbReference type="ChEBI" id="CHEBI:456216"/>
        <dbReference type="EC" id="3.6.4.12"/>
    </reaction>
</comment>
<comment type="subunit">
    <text evidence="2">Interacts with the MHF histone-fold complex to form the FANCM-MHF complex.</text>
</comment>
<comment type="subcellular location">
    <subcellularLocation>
        <location evidence="1">Nucleus</location>
    </subcellularLocation>
</comment>
<comment type="similarity">
    <text evidence="6">Belongs to the DEAD box helicase family. DEAH subfamily. FANCM sub-subfamily.</text>
</comment>
<comment type="sequence caution" evidence="6">
    <conflict type="erroneous initiation">
        <sequence resource="EMBL-CDS" id="CAK43695"/>
    </conflict>
</comment>
<feature type="chain" id="PRO_0000333366" description="ATP-dependent DNA helicase mph1">
    <location>
        <begin position="1"/>
        <end position="1124"/>
    </location>
</feature>
<feature type="domain" description="Helicase ATP-binding" evidence="3">
    <location>
        <begin position="328"/>
        <end position="496"/>
    </location>
</feature>
<feature type="domain" description="Helicase C-terminal" evidence="4">
    <location>
        <begin position="666"/>
        <end position="840"/>
    </location>
</feature>
<feature type="region of interest" description="Disordered" evidence="5">
    <location>
        <begin position="1"/>
        <end position="103"/>
    </location>
</feature>
<feature type="region of interest" description="Disordered" evidence="5">
    <location>
        <begin position="123"/>
        <end position="302"/>
    </location>
</feature>
<feature type="region of interest" description="Disordered" evidence="5">
    <location>
        <begin position="855"/>
        <end position="923"/>
    </location>
</feature>
<feature type="region of interest" description="Disordered" evidence="5">
    <location>
        <begin position="1016"/>
        <end position="1124"/>
    </location>
</feature>
<feature type="short sequence motif" description="DEAH box" evidence="3">
    <location>
        <begin position="444"/>
        <end position="447"/>
    </location>
</feature>
<feature type="compositionally biased region" description="Acidic residues" evidence="5">
    <location>
        <begin position="7"/>
        <end position="17"/>
    </location>
</feature>
<feature type="compositionally biased region" description="Acidic residues" evidence="5">
    <location>
        <begin position="169"/>
        <end position="178"/>
    </location>
</feature>
<feature type="compositionally biased region" description="Polar residues" evidence="5">
    <location>
        <begin position="210"/>
        <end position="222"/>
    </location>
</feature>
<feature type="compositionally biased region" description="Acidic residues" evidence="5">
    <location>
        <begin position="226"/>
        <end position="236"/>
    </location>
</feature>
<feature type="compositionally biased region" description="Polar residues" evidence="5">
    <location>
        <begin position="255"/>
        <end position="271"/>
    </location>
</feature>
<feature type="compositionally biased region" description="Basic and acidic residues" evidence="5">
    <location>
        <begin position="855"/>
        <end position="873"/>
    </location>
</feature>
<feature type="compositionally biased region" description="Basic residues" evidence="5">
    <location>
        <begin position="874"/>
        <end position="886"/>
    </location>
</feature>
<feature type="compositionally biased region" description="Basic residues" evidence="5">
    <location>
        <begin position="906"/>
        <end position="916"/>
    </location>
</feature>
<feature type="binding site" evidence="3">
    <location>
        <begin position="341"/>
        <end position="348"/>
    </location>
    <ligand>
        <name>ATP</name>
        <dbReference type="ChEBI" id="CHEBI:30616"/>
    </ligand>
</feature>